<dbReference type="GO" id="GO:0005576">
    <property type="term" value="C:extracellular region"/>
    <property type="evidence" value="ECO:0007669"/>
    <property type="project" value="UniProtKB-SubCell"/>
</dbReference>
<dbReference type="GO" id="GO:0007218">
    <property type="term" value="P:neuropeptide signaling pathway"/>
    <property type="evidence" value="ECO:0007669"/>
    <property type="project" value="UniProtKB-KW"/>
</dbReference>
<dbReference type="InterPro" id="IPR013231">
    <property type="entry name" value="Periviscerokinin"/>
</dbReference>
<dbReference type="Pfam" id="PF08259">
    <property type="entry name" value="Periviscerokin"/>
    <property type="match status" value="1"/>
</dbReference>
<name>PVK1_BLAGI</name>
<reference key="1">
    <citation type="journal article" date="2009" name="BMC Evol. Biol.">
        <title>A proteomic approach for studying insect phylogeny: CAPA peptides of ancient insect taxa (Dictyoptera, Blattoptera) as a test case.</title>
        <authorList>
            <person name="Roth S."/>
            <person name="Fromm B."/>
            <person name="Gaede G."/>
            <person name="Predel R."/>
        </authorList>
    </citation>
    <scope>PROTEIN SEQUENCE</scope>
    <scope>AMIDATION AT THR-11</scope>
    <source>
        <tissue>Abdominal perisympathetic organs</tissue>
    </source>
</reference>
<reference evidence="4" key="2">
    <citation type="submission" date="2005-05" db="UniProtKB">
        <authorList>
            <person name="Predel R."/>
        </authorList>
    </citation>
    <scope>PROTEIN SEQUENCE</scope>
    <scope>TISSUE SPECIFICITY</scope>
    <scope>MASS SPECTROMETRY</scope>
    <scope>AMIDATION AT THR-11</scope>
    <source>
        <tissue evidence="2">Abdominal perisympathetic organs</tissue>
    </source>
</reference>
<feature type="peptide" id="PRO_0000044242" description="Periviscerokinin-1">
    <location>
        <begin position="1"/>
        <end position="11"/>
    </location>
</feature>
<feature type="modified residue" description="Threonine amide" evidence="2 3">
    <location>
        <position position="11"/>
    </location>
</feature>
<organism>
    <name type="scientific">Blaberus giganteus</name>
    <name type="common">Giant cockroach</name>
    <dbReference type="NCBI Taxonomy" id="36943"/>
    <lineage>
        <taxon>Eukaryota</taxon>
        <taxon>Metazoa</taxon>
        <taxon>Ecdysozoa</taxon>
        <taxon>Arthropoda</taxon>
        <taxon>Hexapoda</taxon>
        <taxon>Insecta</taxon>
        <taxon>Pterygota</taxon>
        <taxon>Neoptera</taxon>
        <taxon>Polyneoptera</taxon>
        <taxon>Dictyoptera</taxon>
        <taxon>Blattodea</taxon>
        <taxon>Blaberoidea</taxon>
        <taxon>Blaberidae</taxon>
        <taxon>Blaberinae</taxon>
        <taxon>Blaberus</taxon>
    </lineage>
</organism>
<evidence type="ECO:0000255" key="1"/>
<evidence type="ECO:0000269" key="2">
    <source>
    </source>
</evidence>
<evidence type="ECO:0000269" key="3">
    <source ref="2"/>
</evidence>
<evidence type="ECO:0000305" key="4"/>
<keyword id="KW-0027">Amidation</keyword>
<keyword id="KW-0903">Direct protein sequencing</keyword>
<keyword id="KW-0527">Neuropeptide</keyword>
<keyword id="KW-0964">Secreted</keyword>
<comment type="function">
    <text evidence="4">Mediates visceral muscle contractile activity (myotropic activity).</text>
</comment>
<comment type="subcellular location">
    <subcellularLocation>
        <location evidence="4">Secreted</location>
    </subcellularLocation>
</comment>
<comment type="tissue specificity">
    <text evidence="2 3">Expressed in abdominal perisympathetic organs and abdominal ganglia.</text>
</comment>
<comment type="mass spectrometry"/>
<comment type="similarity">
    <text evidence="1">Belongs to the periviscerokinin family.</text>
</comment>
<sequence>GSSGLIPFGRT</sequence>
<proteinExistence type="evidence at protein level"/>
<accession>P84591</accession>
<protein>
    <recommendedName>
        <fullName>Periviscerokinin-1</fullName>
        <shortName>BlaGi-PVK-1</shortName>
        <shortName>PVK-1</shortName>
    </recommendedName>
</protein>